<gene>
    <name evidence="1" type="primary">miaB</name>
    <name type="ordered locus">SAOUHSC_01269</name>
</gene>
<keyword id="KW-0004">4Fe-4S</keyword>
<keyword id="KW-0963">Cytoplasm</keyword>
<keyword id="KW-0408">Iron</keyword>
<keyword id="KW-0411">Iron-sulfur</keyword>
<keyword id="KW-0479">Metal-binding</keyword>
<keyword id="KW-1185">Reference proteome</keyword>
<keyword id="KW-0949">S-adenosyl-L-methionine</keyword>
<keyword id="KW-0808">Transferase</keyword>
<keyword id="KW-0819">tRNA processing</keyword>
<comment type="function">
    <text evidence="1">Catalyzes the methylthiolation of N6-(dimethylallyl)adenosine (i(6)A), leading to the formation of 2-methylthio-N6-(dimethylallyl)adenosine (ms(2)i(6)A) at position 37 in tRNAs that read codons beginning with uridine.</text>
</comment>
<comment type="catalytic activity">
    <reaction evidence="1">
        <text>N(6)-dimethylallyladenosine(37) in tRNA + (sulfur carrier)-SH + AH2 + 2 S-adenosyl-L-methionine = 2-methylsulfanyl-N(6)-dimethylallyladenosine(37) in tRNA + (sulfur carrier)-H + 5'-deoxyadenosine + L-methionine + A + S-adenosyl-L-homocysteine + 2 H(+)</text>
        <dbReference type="Rhea" id="RHEA:37067"/>
        <dbReference type="Rhea" id="RHEA-COMP:10375"/>
        <dbReference type="Rhea" id="RHEA-COMP:10376"/>
        <dbReference type="Rhea" id="RHEA-COMP:14737"/>
        <dbReference type="Rhea" id="RHEA-COMP:14739"/>
        <dbReference type="ChEBI" id="CHEBI:13193"/>
        <dbReference type="ChEBI" id="CHEBI:15378"/>
        <dbReference type="ChEBI" id="CHEBI:17319"/>
        <dbReference type="ChEBI" id="CHEBI:17499"/>
        <dbReference type="ChEBI" id="CHEBI:29917"/>
        <dbReference type="ChEBI" id="CHEBI:57844"/>
        <dbReference type="ChEBI" id="CHEBI:57856"/>
        <dbReference type="ChEBI" id="CHEBI:59789"/>
        <dbReference type="ChEBI" id="CHEBI:64428"/>
        <dbReference type="ChEBI" id="CHEBI:74415"/>
        <dbReference type="ChEBI" id="CHEBI:74417"/>
        <dbReference type="EC" id="2.8.4.3"/>
    </reaction>
</comment>
<comment type="cofactor">
    <cofactor evidence="1">
        <name>[4Fe-4S] cluster</name>
        <dbReference type="ChEBI" id="CHEBI:49883"/>
    </cofactor>
    <text evidence="1">Binds 2 [4Fe-4S] clusters. One cluster is coordinated with 3 cysteines and an exchangeable S-adenosyl-L-methionine.</text>
</comment>
<comment type="subunit">
    <text evidence="1">Monomer.</text>
</comment>
<comment type="subcellular location">
    <subcellularLocation>
        <location evidence="1">Cytoplasm</location>
    </subcellularLocation>
</comment>
<comment type="similarity">
    <text evidence="1">Belongs to the methylthiotransferase family. MiaB subfamily.</text>
</comment>
<protein>
    <recommendedName>
        <fullName evidence="1">tRNA-2-methylthio-N(6)-dimethylallyladenosine synthase</fullName>
        <ecNumber evidence="1">2.8.4.3</ecNumber>
    </recommendedName>
    <alternativeName>
        <fullName evidence="1">(Dimethylallyl)adenosine tRNA methylthiotransferase MiaB</fullName>
    </alternativeName>
    <alternativeName>
        <fullName evidence="1">tRNA-i(6)A37 methylthiotransferase</fullName>
    </alternativeName>
</protein>
<name>MIAB_STAA8</name>
<sequence length="514" mass="58931">MNEEQRKASSVDVLAERDKKAEKDYSKYFEHVYQPPNLKEAKKRGKQEVRYNRDFQIDEKYRGMGNERTFLIKTYGCQMNAHDTEVIAGILEALGYQATTDINTADVILINTCAIRENAENKVFSEIGNLKHLKKERPDILIGVCGCMSQEESVVNKILKSYQNVDMIFGTHNIHHLPEILEEAYLSKAMVVEVWSKEGDVIENLPKVREGNIKAWVNIMYGCDKFCTYCIVPFTRGKERSRRPEDIIDEVRELAREGYKEITLLGQNVNSYGKDLQDIEYDLGDLLQAISKIAIPRVRFTTSHPWDFTDHMIDVISEGGNIVPHIHLPVQSGNNAVLKIMGRKYTRESYLDLVKRIKDRIPNVALTTDIIVGYPNESEEQFEETLTLYDEVGFEHAYTYLYSQRDGTPAAKMKDNVPLNVKKERLQRLNKKVGHYSQIAMSKYEGQTVTVLCEGSSKKDDQVLAGYTDKNKLVNFKAPKEMIGKLVEVRIDEAKQYSLNGSFIKEVEPEMVIQ</sequence>
<organism>
    <name type="scientific">Staphylococcus aureus (strain NCTC 8325 / PS 47)</name>
    <dbReference type="NCBI Taxonomy" id="93061"/>
    <lineage>
        <taxon>Bacteria</taxon>
        <taxon>Bacillati</taxon>
        <taxon>Bacillota</taxon>
        <taxon>Bacilli</taxon>
        <taxon>Bacillales</taxon>
        <taxon>Staphylococcaceae</taxon>
        <taxon>Staphylococcus</taxon>
    </lineage>
</organism>
<feature type="chain" id="PRO_0000374574" description="tRNA-2-methylthio-N(6)-dimethylallyladenosine synthase">
    <location>
        <begin position="1"/>
        <end position="514"/>
    </location>
</feature>
<feature type="domain" description="MTTase N-terminal" evidence="1">
    <location>
        <begin position="68"/>
        <end position="186"/>
    </location>
</feature>
<feature type="domain" description="Radical SAM core" evidence="2">
    <location>
        <begin position="209"/>
        <end position="440"/>
    </location>
</feature>
<feature type="domain" description="TRAM" evidence="1">
    <location>
        <begin position="442"/>
        <end position="505"/>
    </location>
</feature>
<feature type="region of interest" description="Disordered" evidence="3">
    <location>
        <begin position="1"/>
        <end position="21"/>
    </location>
</feature>
<feature type="binding site" evidence="1">
    <location>
        <position position="77"/>
    </location>
    <ligand>
        <name>[4Fe-4S] cluster</name>
        <dbReference type="ChEBI" id="CHEBI:49883"/>
        <label>1</label>
    </ligand>
</feature>
<feature type="binding site" evidence="1">
    <location>
        <position position="113"/>
    </location>
    <ligand>
        <name>[4Fe-4S] cluster</name>
        <dbReference type="ChEBI" id="CHEBI:49883"/>
        <label>1</label>
    </ligand>
</feature>
<feature type="binding site" evidence="1">
    <location>
        <position position="147"/>
    </location>
    <ligand>
        <name>[4Fe-4S] cluster</name>
        <dbReference type="ChEBI" id="CHEBI:49883"/>
        <label>1</label>
    </ligand>
</feature>
<feature type="binding site" evidence="1">
    <location>
        <position position="223"/>
    </location>
    <ligand>
        <name>[4Fe-4S] cluster</name>
        <dbReference type="ChEBI" id="CHEBI:49883"/>
        <label>2</label>
        <note>4Fe-4S-S-AdoMet</note>
    </ligand>
</feature>
<feature type="binding site" evidence="1">
    <location>
        <position position="227"/>
    </location>
    <ligand>
        <name>[4Fe-4S] cluster</name>
        <dbReference type="ChEBI" id="CHEBI:49883"/>
        <label>2</label>
        <note>4Fe-4S-S-AdoMet</note>
    </ligand>
</feature>
<feature type="binding site" evidence="1">
    <location>
        <position position="230"/>
    </location>
    <ligand>
        <name>[4Fe-4S] cluster</name>
        <dbReference type="ChEBI" id="CHEBI:49883"/>
        <label>2</label>
        <note>4Fe-4S-S-AdoMet</note>
    </ligand>
</feature>
<dbReference type="EC" id="2.8.4.3" evidence="1"/>
<dbReference type="EMBL" id="CP000253">
    <property type="protein sequence ID" value="ABD30370.1"/>
    <property type="molecule type" value="Genomic_DNA"/>
</dbReference>
<dbReference type="RefSeq" id="WP_001001523.1">
    <property type="nucleotide sequence ID" value="NZ_LS483365.1"/>
</dbReference>
<dbReference type="RefSeq" id="YP_499802.1">
    <property type="nucleotide sequence ID" value="NC_007795.1"/>
</dbReference>
<dbReference type="SMR" id="Q2FZ02"/>
<dbReference type="STRING" id="93061.SAOUHSC_01269"/>
<dbReference type="PaxDb" id="1280-SAXN108_1297"/>
<dbReference type="GeneID" id="3919922"/>
<dbReference type="KEGG" id="sao:SAOUHSC_01269"/>
<dbReference type="PATRIC" id="fig|93061.5.peg.1163"/>
<dbReference type="eggNOG" id="COG0621">
    <property type="taxonomic scope" value="Bacteria"/>
</dbReference>
<dbReference type="HOGENOM" id="CLU_018697_2_0_9"/>
<dbReference type="OrthoDB" id="9805215at2"/>
<dbReference type="PRO" id="PR:Q2FZ02"/>
<dbReference type="Proteomes" id="UP000008816">
    <property type="component" value="Chromosome"/>
</dbReference>
<dbReference type="GO" id="GO:0005829">
    <property type="term" value="C:cytosol"/>
    <property type="evidence" value="ECO:0000318"/>
    <property type="project" value="GO_Central"/>
</dbReference>
<dbReference type="GO" id="GO:0051539">
    <property type="term" value="F:4 iron, 4 sulfur cluster binding"/>
    <property type="evidence" value="ECO:0000318"/>
    <property type="project" value="GO_Central"/>
</dbReference>
<dbReference type="GO" id="GO:0046872">
    <property type="term" value="F:metal ion binding"/>
    <property type="evidence" value="ECO:0007669"/>
    <property type="project" value="UniProtKB-KW"/>
</dbReference>
<dbReference type="GO" id="GO:0035597">
    <property type="term" value="F:N6-isopentenyladenosine methylthiotransferase activity"/>
    <property type="evidence" value="ECO:0000318"/>
    <property type="project" value="GO_Central"/>
</dbReference>
<dbReference type="GO" id="GO:0035600">
    <property type="term" value="P:tRNA methylthiolation"/>
    <property type="evidence" value="ECO:0000318"/>
    <property type="project" value="GO_Central"/>
</dbReference>
<dbReference type="CDD" id="cd01335">
    <property type="entry name" value="Radical_SAM"/>
    <property type="match status" value="1"/>
</dbReference>
<dbReference type="FunFam" id="3.40.50.12160:FF:000006">
    <property type="entry name" value="tRNA-2-methylthio-N(6)-dimethylallyladenosine synthase"/>
    <property type="match status" value="1"/>
</dbReference>
<dbReference type="FunFam" id="3.80.30.20:FF:000001">
    <property type="entry name" value="tRNA-2-methylthio-N(6)-dimethylallyladenosine synthase 2"/>
    <property type="match status" value="1"/>
</dbReference>
<dbReference type="Gene3D" id="3.40.50.12160">
    <property type="entry name" value="Methylthiotransferase, N-terminal domain"/>
    <property type="match status" value="1"/>
</dbReference>
<dbReference type="Gene3D" id="3.80.30.20">
    <property type="entry name" value="tm_1862 like domain"/>
    <property type="match status" value="1"/>
</dbReference>
<dbReference type="HAMAP" id="MF_01864">
    <property type="entry name" value="tRNA_metthiotr_MiaB"/>
    <property type="match status" value="1"/>
</dbReference>
<dbReference type="InterPro" id="IPR006638">
    <property type="entry name" value="Elp3/MiaA/NifB-like_rSAM"/>
</dbReference>
<dbReference type="InterPro" id="IPR005839">
    <property type="entry name" value="Methylthiotransferase"/>
</dbReference>
<dbReference type="InterPro" id="IPR020612">
    <property type="entry name" value="Methylthiotransferase_CS"/>
</dbReference>
<dbReference type="InterPro" id="IPR013848">
    <property type="entry name" value="Methylthiotransferase_N"/>
</dbReference>
<dbReference type="InterPro" id="IPR038135">
    <property type="entry name" value="Methylthiotransferase_N_sf"/>
</dbReference>
<dbReference type="InterPro" id="IPR006463">
    <property type="entry name" value="MiaB_methiolase"/>
</dbReference>
<dbReference type="InterPro" id="IPR007197">
    <property type="entry name" value="rSAM"/>
</dbReference>
<dbReference type="InterPro" id="IPR023404">
    <property type="entry name" value="rSAM_horseshoe"/>
</dbReference>
<dbReference type="InterPro" id="IPR002792">
    <property type="entry name" value="TRAM_dom"/>
</dbReference>
<dbReference type="NCBIfam" id="TIGR01574">
    <property type="entry name" value="miaB-methiolase"/>
    <property type="match status" value="1"/>
</dbReference>
<dbReference type="NCBIfam" id="TIGR00089">
    <property type="entry name" value="MiaB/RimO family radical SAM methylthiotransferase"/>
    <property type="match status" value="1"/>
</dbReference>
<dbReference type="PANTHER" id="PTHR43020">
    <property type="entry name" value="CDK5 REGULATORY SUBUNIT-ASSOCIATED PROTEIN 1"/>
    <property type="match status" value="1"/>
</dbReference>
<dbReference type="PANTHER" id="PTHR43020:SF2">
    <property type="entry name" value="MITOCHONDRIAL TRNA METHYLTHIOTRANSFERASE CDK5RAP1"/>
    <property type="match status" value="1"/>
</dbReference>
<dbReference type="Pfam" id="PF04055">
    <property type="entry name" value="Radical_SAM"/>
    <property type="match status" value="1"/>
</dbReference>
<dbReference type="Pfam" id="PF01938">
    <property type="entry name" value="TRAM"/>
    <property type="match status" value="1"/>
</dbReference>
<dbReference type="Pfam" id="PF00919">
    <property type="entry name" value="UPF0004"/>
    <property type="match status" value="1"/>
</dbReference>
<dbReference type="SFLD" id="SFLDF00273">
    <property type="entry name" value="(dimethylallyl)adenosine_tRNA"/>
    <property type="match status" value="1"/>
</dbReference>
<dbReference type="SFLD" id="SFLDG01082">
    <property type="entry name" value="B12-binding_domain_containing"/>
    <property type="match status" value="1"/>
</dbReference>
<dbReference type="SFLD" id="SFLDS00029">
    <property type="entry name" value="Radical_SAM"/>
    <property type="match status" value="1"/>
</dbReference>
<dbReference type="SMART" id="SM00729">
    <property type="entry name" value="Elp3"/>
    <property type="match status" value="1"/>
</dbReference>
<dbReference type="SUPFAM" id="SSF102114">
    <property type="entry name" value="Radical SAM enzymes"/>
    <property type="match status" value="1"/>
</dbReference>
<dbReference type="PROSITE" id="PS51449">
    <property type="entry name" value="MTTASE_N"/>
    <property type="match status" value="1"/>
</dbReference>
<dbReference type="PROSITE" id="PS01278">
    <property type="entry name" value="MTTASE_RADICAL"/>
    <property type="match status" value="1"/>
</dbReference>
<dbReference type="PROSITE" id="PS51918">
    <property type="entry name" value="RADICAL_SAM"/>
    <property type="match status" value="1"/>
</dbReference>
<dbReference type="PROSITE" id="PS50926">
    <property type="entry name" value="TRAM"/>
    <property type="match status" value="1"/>
</dbReference>
<accession>Q2FZ02</accession>
<evidence type="ECO:0000255" key="1">
    <source>
        <dbReference type="HAMAP-Rule" id="MF_01864"/>
    </source>
</evidence>
<evidence type="ECO:0000255" key="2">
    <source>
        <dbReference type="PROSITE-ProRule" id="PRU01266"/>
    </source>
</evidence>
<evidence type="ECO:0000256" key="3">
    <source>
        <dbReference type="SAM" id="MobiDB-lite"/>
    </source>
</evidence>
<reference key="1">
    <citation type="book" date="2006" name="Gram positive pathogens, 2nd edition">
        <title>The Staphylococcus aureus NCTC 8325 genome.</title>
        <editorList>
            <person name="Fischetti V."/>
            <person name="Novick R."/>
            <person name="Ferretti J."/>
            <person name="Portnoy D."/>
            <person name="Rood J."/>
        </editorList>
        <authorList>
            <person name="Gillaspy A.F."/>
            <person name="Worrell V."/>
            <person name="Orvis J."/>
            <person name="Roe B.A."/>
            <person name="Dyer D.W."/>
            <person name="Iandolo J.J."/>
        </authorList>
    </citation>
    <scope>NUCLEOTIDE SEQUENCE [LARGE SCALE GENOMIC DNA]</scope>
    <source>
        <strain>NCTC 8325 / PS 47</strain>
    </source>
</reference>
<proteinExistence type="inferred from homology"/>